<sequence length="181" mass="20633">MIIAITGTPGVGKSTVSNLLFEKLKSGGKDIACINITEVVSKNGLYLEKDIEMDSYVVDFDKLNKYIQSVGTEDLILDGHVSHYLNPDYIIVLRANPLLIKNRLESRNYSSEKVKENVEAELLDVCLVESIEKNDESKIFEIDCSEKDPEKIVNEILMFLDLKNPEYGNISWLEDYFYLIE</sequence>
<organism>
    <name type="scientific">Methanococcus maripaludis (strain C7 / ATCC BAA-1331)</name>
    <dbReference type="NCBI Taxonomy" id="426368"/>
    <lineage>
        <taxon>Archaea</taxon>
        <taxon>Methanobacteriati</taxon>
        <taxon>Methanobacteriota</taxon>
        <taxon>Methanomada group</taxon>
        <taxon>Methanococci</taxon>
        <taxon>Methanococcales</taxon>
        <taxon>Methanococcaceae</taxon>
        <taxon>Methanococcus</taxon>
    </lineage>
</organism>
<dbReference type="EC" id="2.7.4.3" evidence="1"/>
<dbReference type="EMBL" id="CP000745">
    <property type="protein sequence ID" value="ABR65849.1"/>
    <property type="molecule type" value="Genomic_DNA"/>
</dbReference>
<dbReference type="SMR" id="A6VHC3"/>
<dbReference type="STRING" id="426368.MmarC7_0782"/>
<dbReference type="KEGG" id="mmz:MmarC7_0782"/>
<dbReference type="eggNOG" id="arCOG01038">
    <property type="taxonomic scope" value="Archaea"/>
</dbReference>
<dbReference type="HOGENOM" id="CLU_079096_0_1_2"/>
<dbReference type="OrthoDB" id="8730at2157"/>
<dbReference type="GO" id="GO:0004017">
    <property type="term" value="F:adenylate kinase activity"/>
    <property type="evidence" value="ECO:0007669"/>
    <property type="project" value="UniProtKB-UniRule"/>
</dbReference>
<dbReference type="GO" id="GO:0005524">
    <property type="term" value="F:ATP binding"/>
    <property type="evidence" value="ECO:0007669"/>
    <property type="project" value="UniProtKB-UniRule"/>
</dbReference>
<dbReference type="GO" id="GO:0016887">
    <property type="term" value="F:ATP hydrolysis activity"/>
    <property type="evidence" value="ECO:0007669"/>
    <property type="project" value="InterPro"/>
</dbReference>
<dbReference type="GO" id="GO:0042274">
    <property type="term" value="P:ribosomal small subunit biogenesis"/>
    <property type="evidence" value="ECO:0007669"/>
    <property type="project" value="UniProtKB-UniRule"/>
</dbReference>
<dbReference type="GO" id="GO:0006364">
    <property type="term" value="P:rRNA processing"/>
    <property type="evidence" value="ECO:0007669"/>
    <property type="project" value="UniProtKB-KW"/>
</dbReference>
<dbReference type="Gene3D" id="3.40.50.300">
    <property type="entry name" value="P-loop containing nucleotide triphosphate hydrolases"/>
    <property type="match status" value="1"/>
</dbReference>
<dbReference type="HAMAP" id="MF_00039">
    <property type="entry name" value="Adenylate_kinase_AK6"/>
    <property type="match status" value="1"/>
</dbReference>
<dbReference type="InterPro" id="IPR020618">
    <property type="entry name" value="Adenyl_kinase_AK6"/>
</dbReference>
<dbReference type="InterPro" id="IPR027417">
    <property type="entry name" value="P-loop_NTPase"/>
</dbReference>
<dbReference type="NCBIfam" id="NF003012">
    <property type="entry name" value="PRK03839.1"/>
    <property type="match status" value="1"/>
</dbReference>
<dbReference type="PANTHER" id="PTHR12595:SF0">
    <property type="entry name" value="ADENYLATE KINASE ISOENZYME 6"/>
    <property type="match status" value="1"/>
</dbReference>
<dbReference type="PANTHER" id="PTHR12595">
    <property type="entry name" value="POS9-ACTIVATING FACTOR FAP7-RELATED"/>
    <property type="match status" value="1"/>
</dbReference>
<dbReference type="Pfam" id="PF13238">
    <property type="entry name" value="AAA_18"/>
    <property type="match status" value="1"/>
</dbReference>
<dbReference type="SUPFAM" id="SSF52540">
    <property type="entry name" value="P-loop containing nucleoside triphosphate hydrolases"/>
    <property type="match status" value="1"/>
</dbReference>
<proteinExistence type="inferred from homology"/>
<accession>A6VHC3</accession>
<gene>
    <name type="ordered locus">MmarC7_0782</name>
</gene>
<reference key="1">
    <citation type="submission" date="2007-06" db="EMBL/GenBank/DDBJ databases">
        <title>Complete sequence of Methanococcus maripaludis C7.</title>
        <authorList>
            <consortium name="US DOE Joint Genome Institute"/>
            <person name="Copeland A."/>
            <person name="Lucas S."/>
            <person name="Lapidus A."/>
            <person name="Barry K."/>
            <person name="Glavina del Rio T."/>
            <person name="Dalin E."/>
            <person name="Tice H."/>
            <person name="Pitluck S."/>
            <person name="Clum A."/>
            <person name="Schmutz J."/>
            <person name="Larimer F."/>
            <person name="Land M."/>
            <person name="Hauser L."/>
            <person name="Kyrpides N."/>
            <person name="Anderson I."/>
            <person name="Sieprawska-Lupa M."/>
            <person name="Whitman W.B."/>
            <person name="Richardson P."/>
        </authorList>
    </citation>
    <scope>NUCLEOTIDE SEQUENCE [LARGE SCALE GENOMIC DNA]</scope>
    <source>
        <strain>C7 / ATCC BAA-1331</strain>
    </source>
</reference>
<comment type="function">
    <text evidence="1">Broad-specificity nucleoside monophosphate (NMP) kinase that catalyzes the reversible transfer of the terminal phosphate group between nucleoside triphosphates and monophosphates. Also has ATPase activity. Involved in the late maturation steps of the 30S ribosomal particles, specifically 16S rRNA maturation. While NMP activity is not required for ribosome maturation, ATPase activity is. Associates transiently with small ribosomal subunit protein uS11. ATP hydrolysis breaks the interaction with uS11. May temporarily remove uS11 from the ribosome to enable a conformational change of the ribosomal RNA that is needed for the final maturation step of the small ribosomal subunit.</text>
</comment>
<comment type="catalytic activity">
    <reaction evidence="1">
        <text>AMP + ATP = 2 ADP</text>
        <dbReference type="Rhea" id="RHEA:12973"/>
        <dbReference type="ChEBI" id="CHEBI:30616"/>
        <dbReference type="ChEBI" id="CHEBI:456215"/>
        <dbReference type="ChEBI" id="CHEBI:456216"/>
        <dbReference type="EC" id="2.7.4.3"/>
    </reaction>
</comment>
<comment type="catalytic activity">
    <reaction evidence="1">
        <text>ATP + H2O = ADP + phosphate + H(+)</text>
        <dbReference type="Rhea" id="RHEA:13065"/>
        <dbReference type="ChEBI" id="CHEBI:15377"/>
        <dbReference type="ChEBI" id="CHEBI:15378"/>
        <dbReference type="ChEBI" id="CHEBI:30616"/>
        <dbReference type="ChEBI" id="CHEBI:43474"/>
        <dbReference type="ChEBI" id="CHEBI:456216"/>
    </reaction>
</comment>
<comment type="subunit">
    <text evidence="1">Interacts with uS11. Not a structural component of 40S pre-ribosomes, but transiently interacts with them by binding to uS11.</text>
</comment>
<comment type="similarity">
    <text evidence="1">Belongs to the adenylate kinase family. AK6 subfamily.</text>
</comment>
<evidence type="ECO:0000255" key="1">
    <source>
        <dbReference type="HAMAP-Rule" id="MF_00039"/>
    </source>
</evidence>
<protein>
    <recommendedName>
        <fullName evidence="1">Putative adenylate kinase</fullName>
        <shortName evidence="1">AK</shortName>
        <ecNumber evidence="1">2.7.4.3</ecNumber>
    </recommendedName>
    <alternativeName>
        <fullName evidence="1">ATP-AMP transphosphorylase</fullName>
    </alternativeName>
</protein>
<feature type="chain" id="PRO_1000003092" description="Putative adenylate kinase">
    <location>
        <begin position="1"/>
        <end position="181"/>
    </location>
</feature>
<feature type="region of interest" description="NMP" evidence="1">
    <location>
        <begin position="35"/>
        <end position="58"/>
    </location>
</feature>
<feature type="region of interest" description="LID" evidence="1">
    <location>
        <begin position="106"/>
        <end position="116"/>
    </location>
</feature>
<feature type="binding site" evidence="1">
    <location>
        <position position="10"/>
    </location>
    <ligand>
        <name>ATP</name>
        <dbReference type="ChEBI" id="CHEBI:30616"/>
    </ligand>
</feature>
<feature type="binding site" evidence="1">
    <location>
        <position position="12"/>
    </location>
    <ligand>
        <name>ATP</name>
        <dbReference type="ChEBI" id="CHEBI:30616"/>
    </ligand>
</feature>
<feature type="binding site" evidence="1">
    <location>
        <position position="13"/>
    </location>
    <ligand>
        <name>ATP</name>
        <dbReference type="ChEBI" id="CHEBI:30616"/>
    </ligand>
</feature>
<feature type="binding site" evidence="1">
    <location>
        <position position="14"/>
    </location>
    <ligand>
        <name>ATP</name>
        <dbReference type="ChEBI" id="CHEBI:30616"/>
    </ligand>
</feature>
<feature type="binding site" evidence="1">
    <location>
        <position position="15"/>
    </location>
    <ligand>
        <name>ATP</name>
        <dbReference type="ChEBI" id="CHEBI:30616"/>
    </ligand>
</feature>
<feature type="binding site" evidence="1">
    <location>
        <position position="107"/>
    </location>
    <ligand>
        <name>ATP</name>
        <dbReference type="ChEBI" id="CHEBI:30616"/>
    </ligand>
</feature>
<feature type="binding site" evidence="1">
    <location>
        <position position="147"/>
    </location>
    <ligand>
        <name>ATP</name>
        <dbReference type="ChEBI" id="CHEBI:30616"/>
    </ligand>
</feature>
<keyword id="KW-0067">ATP-binding</keyword>
<keyword id="KW-0418">Kinase</keyword>
<keyword id="KW-0547">Nucleotide-binding</keyword>
<keyword id="KW-0690">Ribosome biogenesis</keyword>
<keyword id="KW-0698">rRNA processing</keyword>
<keyword id="KW-0808">Transferase</keyword>
<name>KAD6_METM7</name>